<dbReference type="EC" id="3.1.27.-" evidence="4"/>
<dbReference type="EMBL" id="AY219870">
    <property type="protein sequence ID" value="AAO62354.1"/>
    <property type="molecule type" value="mRNA"/>
</dbReference>
<dbReference type="EMBL" id="AK136415">
    <property type="protein sequence ID" value="BAE22968.1"/>
    <property type="molecule type" value="mRNA"/>
</dbReference>
<dbReference type="EMBL" id="AK165799">
    <property type="protein sequence ID" value="BAE38385.1"/>
    <property type="molecule type" value="mRNA"/>
</dbReference>
<dbReference type="EMBL" id="AC122877">
    <property type="status" value="NOT_ANNOTATED_CDS"/>
    <property type="molecule type" value="Genomic_DNA"/>
</dbReference>
<dbReference type="EMBL" id="CH466659">
    <property type="protein sequence ID" value="EDL42283.1"/>
    <property type="molecule type" value="Genomic_DNA"/>
</dbReference>
<dbReference type="EMBL" id="BC042938">
    <property type="protein sequence ID" value="AAH42938.2"/>
    <property type="molecule type" value="mRNA"/>
</dbReference>
<dbReference type="EMBL" id="BC132444">
    <property type="protein sequence ID" value="AAI32445.1"/>
    <property type="molecule type" value="mRNA"/>
</dbReference>
<dbReference type="EMBL" id="BC132448">
    <property type="protein sequence ID" value="AAI32449.1"/>
    <property type="molecule type" value="mRNA"/>
</dbReference>
<dbReference type="CCDS" id="CCDS36911.1"/>
<dbReference type="RefSeq" id="NP_808212.2">
    <property type="nucleotide sequence ID" value="NM_177544.4"/>
</dbReference>
<dbReference type="PDB" id="2J4T">
    <property type="method" value="X-ray"/>
    <property type="resolution" value="2.02 A"/>
    <property type="chains" value="A/B=1-144"/>
</dbReference>
<dbReference type="PDBsum" id="2J4T"/>
<dbReference type="SMR" id="Q3TMQ6"/>
<dbReference type="FunCoup" id="Q3TMQ6">
    <property type="interactions" value="10"/>
</dbReference>
<dbReference type="STRING" id="10090.ENSMUSP00000073525"/>
<dbReference type="iPTMnet" id="Q3TMQ6"/>
<dbReference type="PhosphoSitePlus" id="Q3TMQ6"/>
<dbReference type="jPOST" id="Q3TMQ6"/>
<dbReference type="PaxDb" id="10090-ENSMUSP00000073525"/>
<dbReference type="PeptideAtlas" id="Q3TMQ6"/>
<dbReference type="ProteomicsDB" id="281980"/>
<dbReference type="DNASU" id="219033"/>
<dbReference type="Ensembl" id="ENSMUST00000073860.6">
    <property type="protein sequence ID" value="ENSMUSP00000073525.6"/>
    <property type="gene ID" value="ENSMUSG00000060615.6"/>
</dbReference>
<dbReference type="GeneID" id="219033"/>
<dbReference type="KEGG" id="mmu:219033"/>
<dbReference type="UCSC" id="uc007tnd.1">
    <property type="organism name" value="mouse"/>
</dbReference>
<dbReference type="AGR" id="MGI:2656551"/>
<dbReference type="CTD" id="219033"/>
<dbReference type="MGI" id="MGI:2656551">
    <property type="gene designation" value="Ang4"/>
</dbReference>
<dbReference type="VEuPathDB" id="HostDB:ENSMUSG00000060615"/>
<dbReference type="eggNOG" id="ENOG502S9Q1">
    <property type="taxonomic scope" value="Eukaryota"/>
</dbReference>
<dbReference type="GeneTree" id="ENSGT00940000162981"/>
<dbReference type="HOGENOM" id="CLU_117006_3_1_1"/>
<dbReference type="InParanoid" id="Q3TMQ6"/>
<dbReference type="OMA" id="EETRYDQ"/>
<dbReference type="OrthoDB" id="8573660at2759"/>
<dbReference type="PhylomeDB" id="Q3TMQ6"/>
<dbReference type="TreeFam" id="TF333393"/>
<dbReference type="BioGRID-ORCS" id="219033">
    <property type="hits" value="2 hits in 74 CRISPR screens"/>
</dbReference>
<dbReference type="ChiTaRS" id="Ang4">
    <property type="organism name" value="mouse"/>
</dbReference>
<dbReference type="EvolutionaryTrace" id="Q3TMQ6"/>
<dbReference type="PRO" id="PR:Q3TMQ6"/>
<dbReference type="Proteomes" id="UP000000589">
    <property type="component" value="Chromosome 14"/>
</dbReference>
<dbReference type="RNAct" id="Q3TMQ6">
    <property type="molecule type" value="protein"/>
</dbReference>
<dbReference type="Bgee" id="ENSMUSG00000060615">
    <property type="expression patterns" value="Expressed in paneth cell and 30 other cell types or tissues"/>
</dbReference>
<dbReference type="ExpressionAtlas" id="Q3TMQ6">
    <property type="expression patterns" value="baseline and differential"/>
</dbReference>
<dbReference type="GO" id="GO:0005615">
    <property type="term" value="C:extracellular space"/>
    <property type="evidence" value="ECO:0000314"/>
    <property type="project" value="MGI"/>
</dbReference>
<dbReference type="GO" id="GO:0005730">
    <property type="term" value="C:nucleolus"/>
    <property type="evidence" value="ECO:0007669"/>
    <property type="project" value="UniProtKB-SubCell"/>
</dbReference>
<dbReference type="GO" id="GO:0030141">
    <property type="term" value="C:secretory granule"/>
    <property type="evidence" value="ECO:0000314"/>
    <property type="project" value="MGI"/>
</dbReference>
<dbReference type="GO" id="GO:0004519">
    <property type="term" value="F:endonuclease activity"/>
    <property type="evidence" value="ECO:0007669"/>
    <property type="project" value="UniProtKB-KW"/>
</dbReference>
<dbReference type="GO" id="GO:0003676">
    <property type="term" value="F:nucleic acid binding"/>
    <property type="evidence" value="ECO:0007669"/>
    <property type="project" value="InterPro"/>
</dbReference>
<dbReference type="GO" id="GO:0004540">
    <property type="term" value="F:RNA nuclease activity"/>
    <property type="evidence" value="ECO:0000315"/>
    <property type="project" value="UniProtKB"/>
</dbReference>
<dbReference type="GO" id="GO:0001525">
    <property type="term" value="P:angiogenesis"/>
    <property type="evidence" value="ECO:0000315"/>
    <property type="project" value="UniProtKB"/>
</dbReference>
<dbReference type="GO" id="GO:0019731">
    <property type="term" value="P:antibacterial humoral response"/>
    <property type="evidence" value="ECO:0000314"/>
    <property type="project" value="MGI"/>
</dbReference>
<dbReference type="GO" id="GO:0042742">
    <property type="term" value="P:defense response to bacterium"/>
    <property type="evidence" value="ECO:0000314"/>
    <property type="project" value="MGI"/>
</dbReference>
<dbReference type="GO" id="GO:0008284">
    <property type="term" value="P:positive regulation of cell population proliferation"/>
    <property type="evidence" value="ECO:0000315"/>
    <property type="project" value="UniProtKB"/>
</dbReference>
<dbReference type="GO" id="GO:0009617">
    <property type="term" value="P:response to bacterium"/>
    <property type="evidence" value="ECO:0000270"/>
    <property type="project" value="MGI"/>
</dbReference>
<dbReference type="GO" id="GO:0006401">
    <property type="term" value="P:RNA catabolic process"/>
    <property type="evidence" value="ECO:0000315"/>
    <property type="project" value="UniProtKB"/>
</dbReference>
<dbReference type="CDD" id="cd06265">
    <property type="entry name" value="RNase_A_canonical"/>
    <property type="match status" value="1"/>
</dbReference>
<dbReference type="FunFam" id="3.10.130.10:FF:000001">
    <property type="entry name" value="Ribonuclease pancreatic"/>
    <property type="match status" value="1"/>
</dbReference>
<dbReference type="Gene3D" id="3.10.130.10">
    <property type="entry name" value="Ribonuclease A-like domain"/>
    <property type="match status" value="1"/>
</dbReference>
<dbReference type="InterPro" id="IPR001427">
    <property type="entry name" value="RNaseA"/>
</dbReference>
<dbReference type="InterPro" id="IPR036816">
    <property type="entry name" value="RNaseA-like_dom_sf"/>
</dbReference>
<dbReference type="InterPro" id="IPR023411">
    <property type="entry name" value="RNaseA_AS"/>
</dbReference>
<dbReference type="InterPro" id="IPR023412">
    <property type="entry name" value="RNaseA_domain"/>
</dbReference>
<dbReference type="PANTHER" id="PTHR11437:SF60">
    <property type="entry name" value="ANGIOGENIN"/>
    <property type="match status" value="1"/>
</dbReference>
<dbReference type="PANTHER" id="PTHR11437">
    <property type="entry name" value="RIBONUCLEASE"/>
    <property type="match status" value="1"/>
</dbReference>
<dbReference type="Pfam" id="PF00074">
    <property type="entry name" value="RnaseA"/>
    <property type="match status" value="1"/>
</dbReference>
<dbReference type="PRINTS" id="PR00794">
    <property type="entry name" value="RIBONUCLEASE"/>
</dbReference>
<dbReference type="SMART" id="SM00092">
    <property type="entry name" value="RNAse_Pc"/>
    <property type="match status" value="1"/>
</dbReference>
<dbReference type="SUPFAM" id="SSF54076">
    <property type="entry name" value="RNase A-like"/>
    <property type="match status" value="1"/>
</dbReference>
<dbReference type="PROSITE" id="PS00127">
    <property type="entry name" value="RNASE_PANCREATIC"/>
    <property type="match status" value="1"/>
</dbReference>
<feature type="signal peptide" evidence="2">
    <location>
        <begin position="1"/>
        <end position="24"/>
    </location>
</feature>
<feature type="chain" id="PRO_0000415440" description="Angiogenin-4">
    <location>
        <begin position="25"/>
        <end position="144"/>
    </location>
</feature>
<feature type="short sequence motif" description="Nucleolar localization signal" evidence="1">
    <location>
        <begin position="54"/>
        <end position="58"/>
    </location>
</feature>
<feature type="active site" description="Proton acceptor" evidence="6">
    <location>
        <position position="36"/>
    </location>
</feature>
<feature type="active site" description="Proton donor" evidence="6">
    <location>
        <position position="136"/>
    </location>
</feature>
<feature type="disulfide bond" evidence="4">
    <location>
        <begin position="49"/>
        <end position="103"/>
    </location>
</feature>
<feature type="disulfide bond" evidence="4">
    <location>
        <begin position="62"/>
        <end position="114"/>
    </location>
</feature>
<feature type="disulfide bond" evidence="4">
    <location>
        <begin position="80"/>
        <end position="129"/>
    </location>
</feature>
<feature type="mutagenesis site" description="Loss of ribonuclease activity. Loss of angiogenic activity." evidence="4">
    <original>H</original>
    <variation>A</variation>
    <location>
        <position position="36"/>
    </location>
</feature>
<feature type="mutagenesis site" description="Loss of angiogenic activity. No effect on ribonuclease activity." evidence="4">
    <original>R</original>
    <variation>A</variation>
    <location>
        <position position="56"/>
    </location>
</feature>
<feature type="mutagenesis site" description="Loss of angiogenic activity. No effect on ribonuclease activity." evidence="4">
    <original>K</original>
    <variation>N</variation>
    <location>
        <position position="83"/>
    </location>
</feature>
<feature type="mutagenesis site" description="Loss of ribonuclease activity. Loss of angiogenic activity." evidence="4">
    <original>H</original>
    <variation>A</variation>
    <location>
        <position position="136"/>
    </location>
</feature>
<feature type="mutagenesis site" description="Loss of angiogenic activity. Increased ribonuclease activity." evidence="4">
    <original>E</original>
    <variation>A</variation>
    <location>
        <position position="139"/>
    </location>
</feature>
<feature type="sequence conflict" description="In Ref. 1; AAO62354, 4; EDL42283 and 5; AAH42938/AAI32445/AAI32449." evidence="5" ref="1 4 5">
    <original>N</original>
    <variation>K</variation>
    <location>
        <position position="42"/>
    </location>
</feature>
<feature type="sequence conflict" description="In Ref. 2; BAE22968." evidence="5" ref="2">
    <original>F</original>
    <variation>V</variation>
    <location>
        <position position="68"/>
    </location>
</feature>
<feature type="sequence conflict" description="In Ref. 1; AAO62354, 4; EDL42283 and 5; AAH42938/AAI32445/AAI32449." evidence="5" ref="1 4 5">
    <original>GA</original>
    <variation>RG</variation>
    <location>
        <begin position="107"/>
        <end position="108"/>
    </location>
</feature>
<feature type="sequence conflict" description="In Ref. 1; AAO62354, 4; EDL42283 and 5; AAH42938/AAI32445/AAI32449." evidence="5" ref="1 4 5">
    <original>R</original>
    <variation>W</variation>
    <location>
        <position position="111"/>
    </location>
</feature>
<feature type="helix" evidence="7">
    <location>
        <begin position="27"/>
        <end position="36"/>
    </location>
</feature>
<feature type="helix" evidence="7">
    <location>
        <begin position="46"/>
        <end position="55"/>
    </location>
</feature>
<feature type="turn" evidence="7">
    <location>
        <begin position="59"/>
        <end position="62"/>
    </location>
</feature>
<feature type="strand" evidence="7">
    <location>
        <begin position="64"/>
        <end position="69"/>
    </location>
</feature>
<feature type="helix" evidence="7">
    <location>
        <begin position="74"/>
        <end position="77"/>
    </location>
</feature>
<feature type="helix" evidence="7">
    <location>
        <begin position="78"/>
        <end position="80"/>
    </location>
</feature>
<feature type="turn" evidence="7">
    <location>
        <begin position="81"/>
        <end position="83"/>
    </location>
</feature>
<feature type="strand" evidence="7">
    <location>
        <begin position="84"/>
        <end position="86"/>
    </location>
</feature>
<feature type="strand" evidence="7">
    <location>
        <begin position="88"/>
        <end position="96"/>
    </location>
</feature>
<feature type="strand" evidence="7">
    <location>
        <begin position="98"/>
        <end position="105"/>
    </location>
</feature>
<feature type="strand" evidence="7">
    <location>
        <begin position="111"/>
        <end position="113"/>
    </location>
</feature>
<feature type="strand" evidence="7">
    <location>
        <begin position="116"/>
        <end position="123"/>
    </location>
</feature>
<feature type="strand" evidence="7">
    <location>
        <begin position="126"/>
        <end position="130"/>
    </location>
</feature>
<feature type="strand" evidence="7">
    <location>
        <begin position="133"/>
        <end position="137"/>
    </location>
</feature>
<feature type="helix" evidence="7">
    <location>
        <begin position="139"/>
        <end position="142"/>
    </location>
</feature>
<evidence type="ECO:0000250" key="1">
    <source>
        <dbReference type="UniProtKB" id="P03950"/>
    </source>
</evidence>
<evidence type="ECO:0000255" key="2"/>
<evidence type="ECO:0000269" key="3">
    <source>
    </source>
</evidence>
<evidence type="ECO:0000269" key="4">
    <source>
    </source>
</evidence>
<evidence type="ECO:0000305" key="5"/>
<evidence type="ECO:0000305" key="6">
    <source>
    </source>
</evidence>
<evidence type="ECO:0007829" key="7">
    <source>
        <dbReference type="PDB" id="2J4T"/>
    </source>
</evidence>
<protein>
    <recommendedName>
        <fullName>Angiogenin-4</fullName>
        <ecNumber evidence="4">3.1.27.-</ecNumber>
    </recommendedName>
</protein>
<name>ANG4_MOUSE</name>
<gene>
    <name type="primary">Ang4</name>
</gene>
<organism>
    <name type="scientific">Mus musculus</name>
    <name type="common">Mouse</name>
    <dbReference type="NCBI Taxonomy" id="10090"/>
    <lineage>
        <taxon>Eukaryota</taxon>
        <taxon>Metazoa</taxon>
        <taxon>Chordata</taxon>
        <taxon>Craniata</taxon>
        <taxon>Vertebrata</taxon>
        <taxon>Euteleostomi</taxon>
        <taxon>Mammalia</taxon>
        <taxon>Eutheria</taxon>
        <taxon>Euarchontoglires</taxon>
        <taxon>Glires</taxon>
        <taxon>Rodentia</taxon>
        <taxon>Myomorpha</taxon>
        <taxon>Muroidea</taxon>
        <taxon>Muridae</taxon>
        <taxon>Murinae</taxon>
        <taxon>Mus</taxon>
        <taxon>Mus</taxon>
    </lineage>
</organism>
<keyword id="KW-0002">3D-structure</keyword>
<keyword id="KW-0037">Angiogenesis</keyword>
<keyword id="KW-0044">Antibiotic</keyword>
<keyword id="KW-0929">Antimicrobial</keyword>
<keyword id="KW-0968">Cytoplasmic vesicle</keyword>
<keyword id="KW-1015">Disulfide bond</keyword>
<keyword id="KW-0255">Endonuclease</keyword>
<keyword id="KW-0378">Hydrolase</keyword>
<keyword id="KW-0540">Nuclease</keyword>
<keyword id="KW-0539">Nucleus</keyword>
<keyword id="KW-1185">Reference proteome</keyword>
<keyword id="KW-0964">Secreted</keyword>
<keyword id="KW-0732">Signal</keyword>
<sequence>MTMSPCPLLLVFVLGLVVIPPTLAQNERYEKFLRQHYDAKPNGRDDRYCESMMKERKLTSPCKDVNTFIHGTKKNIRAICGKKGSPYGENFRISNSPFQITTCTHSGASPRPPCGYRAFKDFRYIVIACEDGWPVHFDESFISP</sequence>
<accession>Q3TMQ6</accession>
<accession>Q3UWE7</accession>
<accession>Q80XS4</accession>
<accession>Q80Z85</accession>
<comment type="function">
    <text evidence="3 4">Has bactericidal activity against E.faecalis and L.monocytogenes, but not against L.innocua and E.coli. Promotes angiogenesis (in vitro). Has low ribonuclease activity (in vitro). Promotes proliferation of melanoma cells, but not of endothelial cells or fibroblasts (in vitro).</text>
</comment>
<comment type="subcellular location">
    <subcellularLocation>
        <location evidence="3">Secreted</location>
    </subcellularLocation>
    <subcellularLocation>
        <location evidence="3">Cytoplasmic vesicle</location>
        <location evidence="3">Secretory vesicle lumen</location>
    </subcellularLocation>
    <subcellularLocation>
        <location evidence="1">Nucleus</location>
        <location evidence="1">Nucleolus</location>
    </subcellularLocation>
    <text evidence="1 3">Exposure to bacterial lipopolysaccharide (LPS) triggers secretion from intestinal epithelium cells (PubMed:12548285). Rapidly endocytosed by target cells and translocated to the nucleus where it accumulates in the nucleolus and binds to DNA (By similarity).</text>
</comment>
<comment type="tissue specificity">
    <text evidence="3">Detected in small intestine, caecum and colon, with the highest expression in Paneth cells in the intestinal epithelium.</text>
</comment>
<comment type="induction">
    <text evidence="3">Up-regulated in small intestine by contact with normal intestinal microflora. Expressed at very low levels in intestine from germ-free mice.</text>
</comment>
<comment type="similarity">
    <text evidence="5">Belongs to the pancreatic ribonuclease family.</text>
</comment>
<reference key="1">
    <citation type="journal article" date="2003" name="Nat. Immunol.">
        <title>Angiogenins: a new class of microbicidal proteins involved in innate immunity.</title>
        <authorList>
            <person name="Hooper L.V."/>
            <person name="Stappenbeck T.S."/>
            <person name="Hong C.V."/>
            <person name="Gordon J.I."/>
        </authorList>
    </citation>
    <scope>NUCLEOTIDE SEQUENCE [MRNA]</scope>
    <scope>FUNCTION</scope>
    <scope>SUBCELLULAR LOCATION</scope>
    <scope>INDUCTION</scope>
    <scope>TISSUE SPECIFICITY</scope>
    <source>
        <strain>NMRI</strain>
    </source>
</reference>
<reference key="2">
    <citation type="journal article" date="2005" name="Science">
        <title>The transcriptional landscape of the mammalian genome.</title>
        <authorList>
            <person name="Carninci P."/>
            <person name="Kasukawa T."/>
            <person name="Katayama S."/>
            <person name="Gough J."/>
            <person name="Frith M.C."/>
            <person name="Maeda N."/>
            <person name="Oyama R."/>
            <person name="Ravasi T."/>
            <person name="Lenhard B."/>
            <person name="Wells C."/>
            <person name="Kodzius R."/>
            <person name="Shimokawa K."/>
            <person name="Bajic V.B."/>
            <person name="Brenner S.E."/>
            <person name="Batalov S."/>
            <person name="Forrest A.R."/>
            <person name="Zavolan M."/>
            <person name="Davis M.J."/>
            <person name="Wilming L.G."/>
            <person name="Aidinis V."/>
            <person name="Allen J.E."/>
            <person name="Ambesi-Impiombato A."/>
            <person name="Apweiler R."/>
            <person name="Aturaliya R.N."/>
            <person name="Bailey T.L."/>
            <person name="Bansal M."/>
            <person name="Baxter L."/>
            <person name="Beisel K.W."/>
            <person name="Bersano T."/>
            <person name="Bono H."/>
            <person name="Chalk A.M."/>
            <person name="Chiu K.P."/>
            <person name="Choudhary V."/>
            <person name="Christoffels A."/>
            <person name="Clutterbuck D.R."/>
            <person name="Crowe M.L."/>
            <person name="Dalla E."/>
            <person name="Dalrymple B.P."/>
            <person name="de Bono B."/>
            <person name="Della Gatta G."/>
            <person name="di Bernardo D."/>
            <person name="Down T."/>
            <person name="Engstrom P."/>
            <person name="Fagiolini M."/>
            <person name="Faulkner G."/>
            <person name="Fletcher C.F."/>
            <person name="Fukushima T."/>
            <person name="Furuno M."/>
            <person name="Futaki S."/>
            <person name="Gariboldi M."/>
            <person name="Georgii-Hemming P."/>
            <person name="Gingeras T.R."/>
            <person name="Gojobori T."/>
            <person name="Green R.E."/>
            <person name="Gustincich S."/>
            <person name="Harbers M."/>
            <person name="Hayashi Y."/>
            <person name="Hensch T.K."/>
            <person name="Hirokawa N."/>
            <person name="Hill D."/>
            <person name="Huminiecki L."/>
            <person name="Iacono M."/>
            <person name="Ikeo K."/>
            <person name="Iwama A."/>
            <person name="Ishikawa T."/>
            <person name="Jakt M."/>
            <person name="Kanapin A."/>
            <person name="Katoh M."/>
            <person name="Kawasawa Y."/>
            <person name="Kelso J."/>
            <person name="Kitamura H."/>
            <person name="Kitano H."/>
            <person name="Kollias G."/>
            <person name="Krishnan S.P."/>
            <person name="Kruger A."/>
            <person name="Kummerfeld S.K."/>
            <person name="Kurochkin I.V."/>
            <person name="Lareau L.F."/>
            <person name="Lazarevic D."/>
            <person name="Lipovich L."/>
            <person name="Liu J."/>
            <person name="Liuni S."/>
            <person name="McWilliam S."/>
            <person name="Madan Babu M."/>
            <person name="Madera M."/>
            <person name="Marchionni L."/>
            <person name="Matsuda H."/>
            <person name="Matsuzawa S."/>
            <person name="Miki H."/>
            <person name="Mignone F."/>
            <person name="Miyake S."/>
            <person name="Morris K."/>
            <person name="Mottagui-Tabar S."/>
            <person name="Mulder N."/>
            <person name="Nakano N."/>
            <person name="Nakauchi H."/>
            <person name="Ng P."/>
            <person name="Nilsson R."/>
            <person name="Nishiguchi S."/>
            <person name="Nishikawa S."/>
            <person name="Nori F."/>
            <person name="Ohara O."/>
            <person name="Okazaki Y."/>
            <person name="Orlando V."/>
            <person name="Pang K.C."/>
            <person name="Pavan W.J."/>
            <person name="Pavesi G."/>
            <person name="Pesole G."/>
            <person name="Petrovsky N."/>
            <person name="Piazza S."/>
            <person name="Reed J."/>
            <person name="Reid J.F."/>
            <person name="Ring B.Z."/>
            <person name="Ringwald M."/>
            <person name="Rost B."/>
            <person name="Ruan Y."/>
            <person name="Salzberg S.L."/>
            <person name="Sandelin A."/>
            <person name="Schneider C."/>
            <person name="Schoenbach C."/>
            <person name="Sekiguchi K."/>
            <person name="Semple C.A."/>
            <person name="Seno S."/>
            <person name="Sessa L."/>
            <person name="Sheng Y."/>
            <person name="Shibata Y."/>
            <person name="Shimada H."/>
            <person name="Shimada K."/>
            <person name="Silva D."/>
            <person name="Sinclair B."/>
            <person name="Sperling S."/>
            <person name="Stupka E."/>
            <person name="Sugiura K."/>
            <person name="Sultana R."/>
            <person name="Takenaka Y."/>
            <person name="Taki K."/>
            <person name="Tammoja K."/>
            <person name="Tan S.L."/>
            <person name="Tang S."/>
            <person name="Taylor M.S."/>
            <person name="Tegner J."/>
            <person name="Teichmann S.A."/>
            <person name="Ueda H.R."/>
            <person name="van Nimwegen E."/>
            <person name="Verardo R."/>
            <person name="Wei C.L."/>
            <person name="Yagi K."/>
            <person name="Yamanishi H."/>
            <person name="Zabarovsky E."/>
            <person name="Zhu S."/>
            <person name="Zimmer A."/>
            <person name="Hide W."/>
            <person name="Bult C."/>
            <person name="Grimmond S.M."/>
            <person name="Teasdale R.D."/>
            <person name="Liu E.T."/>
            <person name="Brusic V."/>
            <person name="Quackenbush J."/>
            <person name="Wahlestedt C."/>
            <person name="Mattick J.S."/>
            <person name="Hume D.A."/>
            <person name="Kai C."/>
            <person name="Sasaki D."/>
            <person name="Tomaru Y."/>
            <person name="Fukuda S."/>
            <person name="Kanamori-Katayama M."/>
            <person name="Suzuki M."/>
            <person name="Aoki J."/>
            <person name="Arakawa T."/>
            <person name="Iida J."/>
            <person name="Imamura K."/>
            <person name="Itoh M."/>
            <person name="Kato T."/>
            <person name="Kawaji H."/>
            <person name="Kawagashira N."/>
            <person name="Kawashima T."/>
            <person name="Kojima M."/>
            <person name="Kondo S."/>
            <person name="Konno H."/>
            <person name="Nakano K."/>
            <person name="Ninomiya N."/>
            <person name="Nishio T."/>
            <person name="Okada M."/>
            <person name="Plessy C."/>
            <person name="Shibata K."/>
            <person name="Shiraki T."/>
            <person name="Suzuki S."/>
            <person name="Tagami M."/>
            <person name="Waki K."/>
            <person name="Watahiki A."/>
            <person name="Okamura-Oho Y."/>
            <person name="Suzuki H."/>
            <person name="Kawai J."/>
            <person name="Hayashizaki Y."/>
        </authorList>
    </citation>
    <scope>NUCLEOTIDE SEQUENCE [LARGE SCALE MRNA]</scope>
    <source>
        <strain>C57BL/6J</strain>
        <tissue>Colon</tissue>
        <tissue>Intestinal mucosa</tissue>
    </source>
</reference>
<reference key="3">
    <citation type="journal article" date="2009" name="PLoS Biol.">
        <title>Lineage-specific biology revealed by a finished genome assembly of the mouse.</title>
        <authorList>
            <person name="Church D.M."/>
            <person name="Goodstadt L."/>
            <person name="Hillier L.W."/>
            <person name="Zody M.C."/>
            <person name="Goldstein S."/>
            <person name="She X."/>
            <person name="Bult C.J."/>
            <person name="Agarwala R."/>
            <person name="Cherry J.L."/>
            <person name="DiCuccio M."/>
            <person name="Hlavina W."/>
            <person name="Kapustin Y."/>
            <person name="Meric P."/>
            <person name="Maglott D."/>
            <person name="Birtle Z."/>
            <person name="Marques A.C."/>
            <person name="Graves T."/>
            <person name="Zhou S."/>
            <person name="Teague B."/>
            <person name="Potamousis K."/>
            <person name="Churas C."/>
            <person name="Place M."/>
            <person name="Herschleb J."/>
            <person name="Runnheim R."/>
            <person name="Forrest D."/>
            <person name="Amos-Landgraf J."/>
            <person name="Schwartz D.C."/>
            <person name="Cheng Z."/>
            <person name="Lindblad-Toh K."/>
            <person name="Eichler E.E."/>
            <person name="Ponting C.P."/>
        </authorList>
    </citation>
    <scope>NUCLEOTIDE SEQUENCE [LARGE SCALE GENOMIC DNA]</scope>
    <source>
        <strain>C57BL/6J</strain>
    </source>
</reference>
<reference key="4">
    <citation type="submission" date="2005-07" db="EMBL/GenBank/DDBJ databases">
        <authorList>
            <person name="Mural R.J."/>
            <person name="Adams M.D."/>
            <person name="Myers E.W."/>
            <person name="Smith H.O."/>
            <person name="Venter J.C."/>
        </authorList>
    </citation>
    <scope>NUCLEOTIDE SEQUENCE [LARGE SCALE GENOMIC DNA]</scope>
</reference>
<reference key="5">
    <citation type="journal article" date="2004" name="Genome Res.">
        <title>The status, quality, and expansion of the NIH full-length cDNA project: the Mammalian Gene Collection (MGC).</title>
        <authorList>
            <consortium name="The MGC Project Team"/>
        </authorList>
    </citation>
    <scope>NUCLEOTIDE SEQUENCE [LARGE SCALE MRNA]</scope>
    <source>
        <strain>FVB/N</strain>
        <tissue>Brain</tissue>
        <tissue>Colon</tissue>
    </source>
</reference>
<reference key="6">
    <citation type="journal article" date="2007" name="Biochemistry">
        <title>Biological and structural features of murine angiogenin-4, an angiogenic protein.</title>
        <authorList>
            <person name="Crabtree B."/>
            <person name="Holloway D.E."/>
            <person name="Baker M.D."/>
            <person name="Acharya K.R."/>
            <person name="Subramanian V."/>
        </authorList>
    </citation>
    <scope>X-RAY CRYSTALLOGRAPHY (2.02 ANGSTROMS)</scope>
    <scope>FUNCTION</scope>
    <scope>MUTAGENESIS OF HIS-36; ARG-56; LYS-83; HIS-136 AND GLU-139</scope>
    <scope>DISULFIDE BONDS</scope>
</reference>
<proteinExistence type="evidence at protein level"/>